<keyword id="KW-0627">Porphyrin biosynthesis</keyword>
<keyword id="KW-1185">Reference proteome</keyword>
<keyword id="KW-0808">Transferase</keyword>
<accession>Q0VM28</accession>
<reference key="1">
    <citation type="journal article" date="2006" name="Nat. Biotechnol.">
        <title>Genome sequence of the ubiquitous hydrocarbon-degrading marine bacterium Alcanivorax borkumensis.</title>
        <authorList>
            <person name="Schneiker S."/>
            <person name="Martins dos Santos V.A.P."/>
            <person name="Bartels D."/>
            <person name="Bekel T."/>
            <person name="Brecht M."/>
            <person name="Buhrmester J."/>
            <person name="Chernikova T.N."/>
            <person name="Denaro R."/>
            <person name="Ferrer M."/>
            <person name="Gertler C."/>
            <person name="Goesmann A."/>
            <person name="Golyshina O.V."/>
            <person name="Kaminski F."/>
            <person name="Khachane A.N."/>
            <person name="Lang S."/>
            <person name="Linke B."/>
            <person name="McHardy A.C."/>
            <person name="Meyer F."/>
            <person name="Nechitaylo T."/>
            <person name="Puehler A."/>
            <person name="Regenhardt D."/>
            <person name="Rupp O."/>
            <person name="Sabirova J.S."/>
            <person name="Selbitschka W."/>
            <person name="Yakimov M.M."/>
            <person name="Timmis K.N."/>
            <person name="Vorhoelter F.-J."/>
            <person name="Weidner S."/>
            <person name="Kaiser O."/>
            <person name="Golyshin P.N."/>
        </authorList>
    </citation>
    <scope>NUCLEOTIDE SEQUENCE [LARGE SCALE GENOMIC DNA]</scope>
    <source>
        <strain>ATCC 700651 / DSM 11573 / NCIMB 13689 / SK2</strain>
    </source>
</reference>
<evidence type="ECO:0000255" key="1">
    <source>
        <dbReference type="HAMAP-Rule" id="MF_00260"/>
    </source>
</evidence>
<proteinExistence type="inferred from homology"/>
<sequence length="310" mass="33849">MSREILRIATRSSPLAIWQAEYVQQRLESLHEGLRVELVRIKTQGDKILDTPLAKIGGKGLFVKELEEAMMDGRADIAVHSMKDVPMELPPGFALPVICEREDPRDAFVSNTFDGLSSLPHGACVGTSSLRRQAQVKANRPDLVVNSLRGNVQTRLGKLDAGNFDAIILAAAGLKRLEMHDRIRYEMPPEESLPAVGQGAVGIECREGDESTIELLSPLSDVDTWDRVVAERAMNRRLEGGCQVPIAGFALLEDGQLWLRGLVAEEDGSRVLRAEGTAPRGQGAELGIDIAEQLLAQGADEILKALYARQ</sequence>
<gene>
    <name evidence="1" type="primary">hemC</name>
    <name type="ordered locus">ABO_2322</name>
</gene>
<organism>
    <name type="scientific">Alcanivorax borkumensis (strain ATCC 700651 / DSM 11573 / NCIMB 13689 / SK2)</name>
    <dbReference type="NCBI Taxonomy" id="393595"/>
    <lineage>
        <taxon>Bacteria</taxon>
        <taxon>Pseudomonadati</taxon>
        <taxon>Pseudomonadota</taxon>
        <taxon>Gammaproteobacteria</taxon>
        <taxon>Oceanospirillales</taxon>
        <taxon>Alcanivoracaceae</taxon>
        <taxon>Alcanivorax</taxon>
    </lineage>
</organism>
<name>HEM3_ALCBS</name>
<feature type="chain" id="PRO_1000047734" description="Porphobilinogen deaminase">
    <location>
        <begin position="1"/>
        <end position="310"/>
    </location>
</feature>
<feature type="modified residue" description="S-(dipyrrolylmethanemethyl)cysteine" evidence="1">
    <location>
        <position position="242"/>
    </location>
</feature>
<protein>
    <recommendedName>
        <fullName evidence="1">Porphobilinogen deaminase</fullName>
        <shortName evidence="1">PBG</shortName>
        <ecNumber evidence="1">2.5.1.61</ecNumber>
    </recommendedName>
    <alternativeName>
        <fullName evidence="1">Hydroxymethylbilane synthase</fullName>
        <shortName evidence="1">HMBS</shortName>
    </alternativeName>
    <alternativeName>
        <fullName evidence="1">Pre-uroporphyrinogen synthase</fullName>
    </alternativeName>
</protein>
<comment type="function">
    <text evidence="1">Tetrapolymerization of the monopyrrole PBG into the hydroxymethylbilane pre-uroporphyrinogen in several discrete steps.</text>
</comment>
<comment type="catalytic activity">
    <reaction evidence="1">
        <text>4 porphobilinogen + H2O = hydroxymethylbilane + 4 NH4(+)</text>
        <dbReference type="Rhea" id="RHEA:13185"/>
        <dbReference type="ChEBI" id="CHEBI:15377"/>
        <dbReference type="ChEBI" id="CHEBI:28938"/>
        <dbReference type="ChEBI" id="CHEBI:57845"/>
        <dbReference type="ChEBI" id="CHEBI:58126"/>
        <dbReference type="EC" id="2.5.1.61"/>
    </reaction>
</comment>
<comment type="cofactor">
    <cofactor evidence="1">
        <name>dipyrromethane</name>
        <dbReference type="ChEBI" id="CHEBI:60342"/>
    </cofactor>
    <text evidence="1">Binds 1 dipyrromethane group covalently.</text>
</comment>
<comment type="pathway">
    <text evidence="1">Porphyrin-containing compound metabolism; protoporphyrin-IX biosynthesis; coproporphyrinogen-III from 5-aminolevulinate: step 2/4.</text>
</comment>
<comment type="subunit">
    <text evidence="1">Monomer.</text>
</comment>
<comment type="miscellaneous">
    <text evidence="1">The porphobilinogen subunits are added to the dipyrromethane group.</text>
</comment>
<comment type="similarity">
    <text evidence="1">Belongs to the HMBS family.</text>
</comment>
<dbReference type="EC" id="2.5.1.61" evidence="1"/>
<dbReference type="EMBL" id="AM286690">
    <property type="protein sequence ID" value="CAL17770.1"/>
    <property type="molecule type" value="Genomic_DNA"/>
</dbReference>
<dbReference type="RefSeq" id="WP_011589596.1">
    <property type="nucleotide sequence ID" value="NC_008260.1"/>
</dbReference>
<dbReference type="SMR" id="Q0VM28"/>
<dbReference type="STRING" id="393595.ABO_2322"/>
<dbReference type="KEGG" id="abo:ABO_2322"/>
<dbReference type="eggNOG" id="COG0181">
    <property type="taxonomic scope" value="Bacteria"/>
</dbReference>
<dbReference type="HOGENOM" id="CLU_019704_0_2_6"/>
<dbReference type="OrthoDB" id="9810298at2"/>
<dbReference type="UniPathway" id="UPA00251">
    <property type="reaction ID" value="UER00319"/>
</dbReference>
<dbReference type="Proteomes" id="UP000008871">
    <property type="component" value="Chromosome"/>
</dbReference>
<dbReference type="GO" id="GO:0005737">
    <property type="term" value="C:cytoplasm"/>
    <property type="evidence" value="ECO:0007669"/>
    <property type="project" value="TreeGrafter"/>
</dbReference>
<dbReference type="GO" id="GO:0004418">
    <property type="term" value="F:hydroxymethylbilane synthase activity"/>
    <property type="evidence" value="ECO:0007669"/>
    <property type="project" value="UniProtKB-UniRule"/>
</dbReference>
<dbReference type="GO" id="GO:0006782">
    <property type="term" value="P:protoporphyrinogen IX biosynthetic process"/>
    <property type="evidence" value="ECO:0007669"/>
    <property type="project" value="UniProtKB-UniRule"/>
</dbReference>
<dbReference type="CDD" id="cd13646">
    <property type="entry name" value="PBP2_EcHMBS_like"/>
    <property type="match status" value="1"/>
</dbReference>
<dbReference type="FunFam" id="3.30.160.40:FF:000002">
    <property type="entry name" value="Porphobilinogen deaminase"/>
    <property type="match status" value="1"/>
</dbReference>
<dbReference type="FunFam" id="3.40.190.10:FF:000004">
    <property type="entry name" value="Porphobilinogen deaminase"/>
    <property type="match status" value="1"/>
</dbReference>
<dbReference type="FunFam" id="3.40.190.10:FF:000005">
    <property type="entry name" value="Porphobilinogen deaminase"/>
    <property type="match status" value="1"/>
</dbReference>
<dbReference type="Gene3D" id="3.40.190.10">
    <property type="entry name" value="Periplasmic binding protein-like II"/>
    <property type="match status" value="2"/>
</dbReference>
<dbReference type="Gene3D" id="3.30.160.40">
    <property type="entry name" value="Porphobilinogen deaminase, C-terminal domain"/>
    <property type="match status" value="1"/>
</dbReference>
<dbReference type="HAMAP" id="MF_00260">
    <property type="entry name" value="Porphobil_deam"/>
    <property type="match status" value="1"/>
</dbReference>
<dbReference type="InterPro" id="IPR000860">
    <property type="entry name" value="HemC"/>
</dbReference>
<dbReference type="InterPro" id="IPR022419">
    <property type="entry name" value="Porphobilin_deaminase_cofac_BS"/>
</dbReference>
<dbReference type="InterPro" id="IPR022417">
    <property type="entry name" value="Porphobilin_deaminase_N"/>
</dbReference>
<dbReference type="InterPro" id="IPR022418">
    <property type="entry name" value="Porphobilinogen_deaminase_C"/>
</dbReference>
<dbReference type="InterPro" id="IPR036803">
    <property type="entry name" value="Porphobilinogen_deaminase_C_sf"/>
</dbReference>
<dbReference type="NCBIfam" id="TIGR00212">
    <property type="entry name" value="hemC"/>
    <property type="match status" value="1"/>
</dbReference>
<dbReference type="PANTHER" id="PTHR11557">
    <property type="entry name" value="PORPHOBILINOGEN DEAMINASE"/>
    <property type="match status" value="1"/>
</dbReference>
<dbReference type="PANTHER" id="PTHR11557:SF0">
    <property type="entry name" value="PORPHOBILINOGEN DEAMINASE"/>
    <property type="match status" value="1"/>
</dbReference>
<dbReference type="Pfam" id="PF01379">
    <property type="entry name" value="Porphobil_deam"/>
    <property type="match status" value="1"/>
</dbReference>
<dbReference type="Pfam" id="PF03900">
    <property type="entry name" value="Porphobil_deamC"/>
    <property type="match status" value="1"/>
</dbReference>
<dbReference type="PIRSF" id="PIRSF001438">
    <property type="entry name" value="4pyrrol_synth_OHMeBilane_synth"/>
    <property type="match status" value="1"/>
</dbReference>
<dbReference type="PRINTS" id="PR00151">
    <property type="entry name" value="PORPHBDMNASE"/>
</dbReference>
<dbReference type="SUPFAM" id="SSF53850">
    <property type="entry name" value="Periplasmic binding protein-like II"/>
    <property type="match status" value="1"/>
</dbReference>
<dbReference type="SUPFAM" id="SSF54782">
    <property type="entry name" value="Porphobilinogen deaminase (hydroxymethylbilane synthase), C-terminal domain"/>
    <property type="match status" value="1"/>
</dbReference>
<dbReference type="PROSITE" id="PS00533">
    <property type="entry name" value="PORPHOBILINOGEN_DEAM"/>
    <property type="match status" value="1"/>
</dbReference>